<protein>
    <recommendedName>
        <fullName>Glutamate--cysteine ligase EgtA</fullName>
        <ecNumber evidence="2">6.3.2.2</ecNumber>
    </recommendedName>
    <alternativeName>
        <fullName>Gamma-glutamylcysteine synthetase</fullName>
        <shortName>GCS</shortName>
        <shortName>Gamma-ECS</shortName>
    </alternativeName>
</protein>
<organism>
    <name type="scientific">Mycobacterium tuberculosis (strain CDC 1551 / Oshkosh)</name>
    <dbReference type="NCBI Taxonomy" id="83331"/>
    <lineage>
        <taxon>Bacteria</taxon>
        <taxon>Bacillati</taxon>
        <taxon>Actinomycetota</taxon>
        <taxon>Actinomycetes</taxon>
        <taxon>Mycobacteriales</taxon>
        <taxon>Mycobacteriaceae</taxon>
        <taxon>Mycobacterium</taxon>
        <taxon>Mycobacterium tuberculosis complex</taxon>
    </lineage>
</organism>
<reference key="1">
    <citation type="journal article" date="2002" name="J. Bacteriol.">
        <title>Whole-genome comparison of Mycobacterium tuberculosis clinical and laboratory strains.</title>
        <authorList>
            <person name="Fleischmann R.D."/>
            <person name="Alland D."/>
            <person name="Eisen J.A."/>
            <person name="Carpenter L."/>
            <person name="White O."/>
            <person name="Peterson J.D."/>
            <person name="DeBoy R.T."/>
            <person name="Dodson R.J."/>
            <person name="Gwinn M.L."/>
            <person name="Haft D.H."/>
            <person name="Hickey E.K."/>
            <person name="Kolonay J.F."/>
            <person name="Nelson W.C."/>
            <person name="Umayam L.A."/>
            <person name="Ermolaeva M.D."/>
            <person name="Salzberg S.L."/>
            <person name="Delcher A."/>
            <person name="Utterback T.R."/>
            <person name="Weidman J.F."/>
            <person name="Khouri H.M."/>
            <person name="Gill J."/>
            <person name="Mikula A."/>
            <person name="Bishai W."/>
            <person name="Jacobs W.R. Jr."/>
            <person name="Venter J.C."/>
            <person name="Fraser C.M."/>
        </authorList>
    </citation>
    <scope>NUCLEOTIDE SEQUENCE [LARGE SCALE GENOMIC DNA]</scope>
    <source>
        <strain>CDC 1551 / Oshkosh</strain>
    </source>
</reference>
<reference key="2">
    <citation type="journal article" date="2016" name="Cell Rep.">
        <title>Ergothioneine maintains redox and bioenergetic homeostasis essential for drug susceptibility and virulence of Mycobacterium tuberculosis.</title>
        <authorList>
            <person name="Saini V."/>
            <person name="Cumming B.M."/>
            <person name="Guidry L."/>
            <person name="Lamprecht D.A."/>
            <person name="Adamson J.H."/>
            <person name="Reddy V.P."/>
            <person name="Chinta K.C."/>
            <person name="Mazorodze J.H."/>
            <person name="Glasgow J.N."/>
            <person name="Richard-Greenblatt M."/>
            <person name="Gomez-Velasco A."/>
            <person name="Bach H."/>
            <person name="Av-Gay Y."/>
            <person name="Eoh H."/>
            <person name="Rhee K."/>
            <person name="Steyn A.J."/>
        </authorList>
    </citation>
    <scope>FUNCTION</scope>
    <scope>PATHWAY</scope>
    <scope>INDUCTION</scope>
    <scope>OPERON STRUCTURE</scope>
    <scope>DISRUPTION PHENOTYPE</scope>
    <source>
        <strain>CDC 1551 / Oshkosh</strain>
    </source>
</reference>
<comment type="function">
    <text evidence="1 2 5">Catalyzes the synthesis of gamma-glutamylcysteine (gamma-GC) which is used as substrate for the biosynthesis of the low-molecular thiol compound ergothioneine (ERG) (By similarity). ERG is one of the major redox buffers which protects bacteria against redox stressors and antibiotics; loss of ERG or mycothiol (MSH, the other major redox buffer in this bacteria) leads to respiratory alterations and bioenergetic deficiencies that negatively impact virulence (PubMed:26774486).</text>
</comment>
<comment type="catalytic activity">
    <reaction evidence="2">
        <text>L-cysteine + L-glutamate + ATP = gamma-L-glutamyl-L-cysteine + ADP + phosphate + H(+)</text>
        <dbReference type="Rhea" id="RHEA:13285"/>
        <dbReference type="ChEBI" id="CHEBI:15378"/>
        <dbReference type="ChEBI" id="CHEBI:29985"/>
        <dbReference type="ChEBI" id="CHEBI:30616"/>
        <dbReference type="ChEBI" id="CHEBI:35235"/>
        <dbReference type="ChEBI" id="CHEBI:43474"/>
        <dbReference type="ChEBI" id="CHEBI:58173"/>
        <dbReference type="ChEBI" id="CHEBI:456216"/>
        <dbReference type="EC" id="6.3.2.2"/>
    </reaction>
</comment>
<comment type="pathway">
    <text evidence="1 5">Amino-acid biosynthesis; ergothioneine biosynthesis.</text>
</comment>
<comment type="induction">
    <text evidence="3">Expressed in log phase, part of the egtA-egtB-egtC-egtD operon, which does not include egtE (PubMed:26774486).</text>
</comment>
<comment type="disruption phenotype">
    <text evidence="3">Loss of production of ergothioneine (ERG), no alteration in ratio of oxidized versus reduced mycothiol (MSH), 25-fold increase in reactive oxygen species-producing cells, decreased resistance to compounds that cause oxidative stress, decreased resistance to the antibiotics rifampicin, isoniazid, bedaquiline and clofazimine (PubMed:26774486). Increased oxygen consumption and extracellular acidification rates, which are further increased by membrane uncoupler CCCP, indicative of electron chain dysfunction in the absence of ERG (PubMed:26774486). Absence leads to alteration of transcript levels for 68 genes which probably compensate for loss of redox control (PubMed:26774486). Decreased bacterial survival in mouse macrophage cell line, 10,000-fold decreased bacterial burden in infected mice lungs (strain BALB/c), no alteration in mouse lung ERG levels (PubMed:26774486).</text>
</comment>
<comment type="similarity">
    <text evidence="4">Belongs to the glutamate--cysteine ligase type 2 family. EgtA subfamily.</text>
</comment>
<accession>P9WPK6</accession>
<accession>L0TDK0</accession>
<accession>O69672</accession>
<accession>Q7D512</accession>
<sequence length="432" mass="45795">MTLAAMTAAASQLDNAAPDDVEITDSSAAAEYIADGCLVDGPLGRVGLEMEAHCFDPADPFRRPSWEEITEVLEWLSPLPGGSVVSVEPGGAVELSGPPADGVLAAIGAMTRDQAVLRSALANAGLGLVFLGADPLRSPVRVNPGARYRAMEQFFAASHSGVPGAAMMTSTAAIQVNLDAGPQEGWAERVRLAHALGPTMIAIAANSPMLGGRFSGWQSTRQRVWGQMDSARCGPILGASGDHPGIDWAKYALKAPVMMVRSPDTQDTRAVTDYVPFTDWVDGRVLLDGRRATVADLVYHLTTLFPPVRPRQWLEIRYLDSVPDEVWPAVVFTLVTLLDDPVAADLAVDAVEPVATAWDTAARIGLADRRLYLAANRCLAIAARRVPTELIGAMQRLVDHVDRGVCPADDFSDRVIAGGIASAVTGMMHGAS</sequence>
<dbReference type="EC" id="6.3.2.2" evidence="2"/>
<dbReference type="EMBL" id="AE000516">
    <property type="protein sequence ID" value="AAK48174.1"/>
    <property type="molecule type" value="Genomic_DNA"/>
</dbReference>
<dbReference type="PIR" id="A70794">
    <property type="entry name" value="A70794"/>
</dbReference>
<dbReference type="RefSeq" id="WP_003419809.1">
    <property type="nucleotide sequence ID" value="NZ_KK341227.1"/>
</dbReference>
<dbReference type="SMR" id="P9WPK6"/>
<dbReference type="KEGG" id="mtc:MT3807"/>
<dbReference type="PATRIC" id="fig|83331.31.peg.4099"/>
<dbReference type="HOGENOM" id="CLU_037109_0_0_11"/>
<dbReference type="UniPathway" id="UPA01014"/>
<dbReference type="Proteomes" id="UP000001020">
    <property type="component" value="Chromosome"/>
</dbReference>
<dbReference type="GO" id="GO:0005524">
    <property type="term" value="F:ATP binding"/>
    <property type="evidence" value="ECO:0007669"/>
    <property type="project" value="UniProtKB-UniRule"/>
</dbReference>
<dbReference type="GO" id="GO:0004357">
    <property type="term" value="F:glutamate-cysteine ligase activity"/>
    <property type="evidence" value="ECO:0007669"/>
    <property type="project" value="UniProtKB-UniRule"/>
</dbReference>
<dbReference type="GO" id="GO:0052699">
    <property type="term" value="P:ergothioneine biosynthetic process"/>
    <property type="evidence" value="ECO:0007669"/>
    <property type="project" value="UniProtKB-UniRule"/>
</dbReference>
<dbReference type="GO" id="GO:0006750">
    <property type="term" value="P:glutathione biosynthetic process"/>
    <property type="evidence" value="ECO:0007669"/>
    <property type="project" value="InterPro"/>
</dbReference>
<dbReference type="FunFam" id="3.30.590.20:FF:000006">
    <property type="entry name" value="Glutamate--cysteine ligase EgtA"/>
    <property type="match status" value="1"/>
</dbReference>
<dbReference type="Gene3D" id="3.30.590.20">
    <property type="match status" value="1"/>
</dbReference>
<dbReference type="HAMAP" id="MF_02034">
    <property type="entry name" value="EgtA"/>
    <property type="match status" value="1"/>
</dbReference>
<dbReference type="InterPro" id="IPR017809">
    <property type="entry name" value="EgtA_Actinobacteria"/>
</dbReference>
<dbReference type="InterPro" id="IPR035434">
    <property type="entry name" value="GCL_bact_plant"/>
</dbReference>
<dbReference type="InterPro" id="IPR006336">
    <property type="entry name" value="GCS2"/>
</dbReference>
<dbReference type="InterPro" id="IPR014746">
    <property type="entry name" value="Gln_synth/guanido_kin_cat_dom"/>
</dbReference>
<dbReference type="NCBIfam" id="TIGR03444">
    <property type="entry name" value="EgtA_Cys_ligase"/>
    <property type="match status" value="1"/>
</dbReference>
<dbReference type="PANTHER" id="PTHR34378">
    <property type="entry name" value="GLUTAMATE--CYSTEINE LIGASE, CHLOROPLASTIC"/>
    <property type="match status" value="1"/>
</dbReference>
<dbReference type="PANTHER" id="PTHR34378:SF1">
    <property type="entry name" value="GLUTAMATE--CYSTEINE LIGASE, CHLOROPLASTIC"/>
    <property type="match status" value="1"/>
</dbReference>
<dbReference type="Pfam" id="PF04107">
    <property type="entry name" value="GCS2"/>
    <property type="match status" value="1"/>
</dbReference>
<dbReference type="PIRSF" id="PIRSF017901">
    <property type="entry name" value="GCL"/>
    <property type="match status" value="1"/>
</dbReference>
<dbReference type="SUPFAM" id="SSF55931">
    <property type="entry name" value="Glutamine synthetase/guanido kinase"/>
    <property type="match status" value="1"/>
</dbReference>
<feature type="chain" id="PRO_0000426935" description="Glutamate--cysteine ligase EgtA">
    <location>
        <begin position="1"/>
        <end position="432"/>
    </location>
</feature>
<keyword id="KW-0067">ATP-binding</keyword>
<keyword id="KW-0436">Ligase</keyword>
<keyword id="KW-0547">Nucleotide-binding</keyword>
<keyword id="KW-1185">Reference proteome</keyword>
<proteinExistence type="evidence at transcript level"/>
<evidence type="ECO:0000250" key="1">
    <source>
        <dbReference type="UniProtKB" id="A0R5N1"/>
    </source>
</evidence>
<evidence type="ECO:0000250" key="2">
    <source>
        <dbReference type="UniProtKB" id="P9WPK7"/>
    </source>
</evidence>
<evidence type="ECO:0000269" key="3">
    <source>
    </source>
</evidence>
<evidence type="ECO:0000305" key="4"/>
<evidence type="ECO:0000305" key="5">
    <source>
    </source>
</evidence>
<gene>
    <name type="primary">egtA</name>
    <name type="ordered locus">MT3807</name>
</gene>
<name>EGTA_MYCTO</name>